<name>RSMI_HELPJ</name>
<evidence type="ECO:0000255" key="1">
    <source>
        <dbReference type="HAMAP-Rule" id="MF_01877"/>
    </source>
</evidence>
<reference key="1">
    <citation type="journal article" date="1999" name="Nature">
        <title>Genomic sequence comparison of two unrelated isolates of the human gastric pathogen Helicobacter pylori.</title>
        <authorList>
            <person name="Alm R.A."/>
            <person name="Ling L.-S.L."/>
            <person name="Moir D.T."/>
            <person name="King B.L."/>
            <person name="Brown E.D."/>
            <person name="Doig P.C."/>
            <person name="Smith D.R."/>
            <person name="Noonan B."/>
            <person name="Guild B.C."/>
            <person name="deJonge B.L."/>
            <person name="Carmel G."/>
            <person name="Tummino P.J."/>
            <person name="Caruso A."/>
            <person name="Uria-Nickelsen M."/>
            <person name="Mills D.M."/>
            <person name="Ives C."/>
            <person name="Gibson R."/>
            <person name="Merberg D."/>
            <person name="Mills S.D."/>
            <person name="Jiang Q."/>
            <person name="Taylor D.E."/>
            <person name="Vovis G.F."/>
            <person name="Trust T.J."/>
        </authorList>
    </citation>
    <scope>NUCLEOTIDE SEQUENCE [LARGE SCALE GENOMIC DNA]</scope>
    <source>
        <strain>J99 / ATCC 700824</strain>
    </source>
</reference>
<proteinExistence type="inferred from homology"/>
<dbReference type="EC" id="2.1.1.198" evidence="1"/>
<dbReference type="EMBL" id="AE001439">
    <property type="protein sequence ID" value="AAD06077.1"/>
    <property type="molecule type" value="Genomic_DNA"/>
</dbReference>
<dbReference type="PIR" id="F71924">
    <property type="entry name" value="F71924"/>
</dbReference>
<dbReference type="RefSeq" id="WP_000965327.1">
    <property type="nucleotide sequence ID" value="NC_000921.1"/>
</dbReference>
<dbReference type="SMR" id="Q9ZLS8"/>
<dbReference type="KEGG" id="hpj:jhp_0499"/>
<dbReference type="PATRIC" id="fig|85963.30.peg.497"/>
<dbReference type="eggNOG" id="COG0313">
    <property type="taxonomic scope" value="Bacteria"/>
</dbReference>
<dbReference type="Proteomes" id="UP000000804">
    <property type="component" value="Chromosome"/>
</dbReference>
<dbReference type="GO" id="GO:0005737">
    <property type="term" value="C:cytoplasm"/>
    <property type="evidence" value="ECO:0007669"/>
    <property type="project" value="UniProtKB-SubCell"/>
</dbReference>
<dbReference type="GO" id="GO:0070677">
    <property type="term" value="F:rRNA (cytosine-2'-O-)-methyltransferase activity"/>
    <property type="evidence" value="ECO:0007669"/>
    <property type="project" value="UniProtKB-UniRule"/>
</dbReference>
<dbReference type="CDD" id="cd11648">
    <property type="entry name" value="RsmI"/>
    <property type="match status" value="1"/>
</dbReference>
<dbReference type="FunFam" id="3.30.950.10:FF:000002">
    <property type="entry name" value="Ribosomal RNA small subunit methyltransferase I"/>
    <property type="match status" value="1"/>
</dbReference>
<dbReference type="FunFam" id="3.40.1010.10:FF:000007">
    <property type="entry name" value="Ribosomal RNA small subunit methyltransferase I"/>
    <property type="match status" value="1"/>
</dbReference>
<dbReference type="Gene3D" id="3.40.1010.10">
    <property type="entry name" value="Cobalt-precorrin-4 Transmethylase, Domain 1"/>
    <property type="match status" value="1"/>
</dbReference>
<dbReference type="Gene3D" id="3.30.950.10">
    <property type="entry name" value="Methyltransferase, Cobalt-precorrin-4 Transmethylase, Domain 2"/>
    <property type="match status" value="1"/>
</dbReference>
<dbReference type="HAMAP" id="MF_01877">
    <property type="entry name" value="16SrRNA_methyltr_I"/>
    <property type="match status" value="1"/>
</dbReference>
<dbReference type="InterPro" id="IPR000878">
    <property type="entry name" value="4pyrrol_Mease"/>
</dbReference>
<dbReference type="InterPro" id="IPR035996">
    <property type="entry name" value="4pyrrol_Methylase_sf"/>
</dbReference>
<dbReference type="InterPro" id="IPR014777">
    <property type="entry name" value="4pyrrole_Mease_sub1"/>
</dbReference>
<dbReference type="InterPro" id="IPR014776">
    <property type="entry name" value="4pyrrole_Mease_sub2"/>
</dbReference>
<dbReference type="InterPro" id="IPR008189">
    <property type="entry name" value="rRNA_ssu_MeTfrase_I"/>
</dbReference>
<dbReference type="InterPro" id="IPR018063">
    <property type="entry name" value="SAM_MeTrfase_RsmI_CS"/>
</dbReference>
<dbReference type="NCBIfam" id="TIGR00096">
    <property type="entry name" value="16S rRNA (cytidine(1402)-2'-O)-methyltransferase"/>
    <property type="match status" value="1"/>
</dbReference>
<dbReference type="PANTHER" id="PTHR46111">
    <property type="entry name" value="RIBOSOMAL RNA SMALL SUBUNIT METHYLTRANSFERASE I"/>
    <property type="match status" value="1"/>
</dbReference>
<dbReference type="PANTHER" id="PTHR46111:SF1">
    <property type="entry name" value="RIBOSOMAL RNA SMALL SUBUNIT METHYLTRANSFERASE I"/>
    <property type="match status" value="1"/>
</dbReference>
<dbReference type="Pfam" id="PF00590">
    <property type="entry name" value="TP_methylase"/>
    <property type="match status" value="1"/>
</dbReference>
<dbReference type="PIRSF" id="PIRSF005917">
    <property type="entry name" value="MTase_YraL"/>
    <property type="match status" value="1"/>
</dbReference>
<dbReference type="SUPFAM" id="SSF53790">
    <property type="entry name" value="Tetrapyrrole methylase"/>
    <property type="match status" value="1"/>
</dbReference>
<dbReference type="PROSITE" id="PS01296">
    <property type="entry name" value="RSMI"/>
    <property type="match status" value="1"/>
</dbReference>
<sequence>MLYFLPTPIGNLADITLRTLEVLERCEVFLCEDTRVSKRLLHLLAKNPIISHSFPNIAAKKREFIAFHSHNDQEFLNQIEPSFFDKEIAVMSDAGMPSLSDPGMSLVAYALKHNLQYDVLPGANALTTAFCASGFLEGRFFYAGFLPHKSKERRLRIIKILNALAYLEEKTPVVFYESPHRLLETLRDLNDLAQGMHLFAAKELTKLHQQYYLGEISQIMTQLQKSNIQGEWVLVLLNEKKIEPSMGLSALLELDLPPKIKAKMEAAMTQKNAKELYFQRLLEEKKQCD</sequence>
<feature type="chain" id="PRO_0000211942" description="Ribosomal RNA small subunit methyltransferase I">
    <location>
        <begin position="1"/>
        <end position="289"/>
    </location>
</feature>
<gene>
    <name evidence="1" type="primary">rsmI</name>
    <name type="ordered locus">jhp_0499</name>
</gene>
<keyword id="KW-0963">Cytoplasm</keyword>
<keyword id="KW-0489">Methyltransferase</keyword>
<keyword id="KW-0698">rRNA processing</keyword>
<keyword id="KW-0949">S-adenosyl-L-methionine</keyword>
<keyword id="KW-0808">Transferase</keyword>
<organism>
    <name type="scientific">Helicobacter pylori (strain J99 / ATCC 700824)</name>
    <name type="common">Campylobacter pylori J99</name>
    <dbReference type="NCBI Taxonomy" id="85963"/>
    <lineage>
        <taxon>Bacteria</taxon>
        <taxon>Pseudomonadati</taxon>
        <taxon>Campylobacterota</taxon>
        <taxon>Epsilonproteobacteria</taxon>
        <taxon>Campylobacterales</taxon>
        <taxon>Helicobacteraceae</taxon>
        <taxon>Helicobacter</taxon>
    </lineage>
</organism>
<protein>
    <recommendedName>
        <fullName evidence="1">Ribosomal RNA small subunit methyltransferase I</fullName>
        <ecNumber evidence="1">2.1.1.198</ecNumber>
    </recommendedName>
    <alternativeName>
        <fullName evidence="1">16S rRNA 2'-O-ribose C1402 methyltransferase</fullName>
    </alternativeName>
    <alternativeName>
        <fullName evidence="1">rRNA (cytidine-2'-O-)-methyltransferase RsmI</fullName>
    </alternativeName>
</protein>
<accession>Q9ZLS8</accession>
<comment type="function">
    <text evidence="1">Catalyzes the 2'-O-methylation of the ribose of cytidine 1402 (C1402) in 16S rRNA.</text>
</comment>
<comment type="catalytic activity">
    <reaction evidence="1">
        <text>cytidine(1402) in 16S rRNA + S-adenosyl-L-methionine = 2'-O-methylcytidine(1402) in 16S rRNA + S-adenosyl-L-homocysteine + H(+)</text>
        <dbReference type="Rhea" id="RHEA:42924"/>
        <dbReference type="Rhea" id="RHEA-COMP:10285"/>
        <dbReference type="Rhea" id="RHEA-COMP:10286"/>
        <dbReference type="ChEBI" id="CHEBI:15378"/>
        <dbReference type="ChEBI" id="CHEBI:57856"/>
        <dbReference type="ChEBI" id="CHEBI:59789"/>
        <dbReference type="ChEBI" id="CHEBI:74495"/>
        <dbReference type="ChEBI" id="CHEBI:82748"/>
        <dbReference type="EC" id="2.1.1.198"/>
    </reaction>
</comment>
<comment type="subcellular location">
    <subcellularLocation>
        <location evidence="1">Cytoplasm</location>
    </subcellularLocation>
</comment>
<comment type="similarity">
    <text evidence="1">Belongs to the methyltransferase superfamily. RsmI family.</text>
</comment>